<dbReference type="EC" id="3.6.1.9" evidence="1"/>
<dbReference type="EMBL" id="AE015451">
    <property type="protein sequence ID" value="AAN66561.1"/>
    <property type="molecule type" value="Genomic_DNA"/>
</dbReference>
<dbReference type="RefSeq" id="NP_743097.1">
    <property type="nucleotide sequence ID" value="NC_002947.4"/>
</dbReference>
<dbReference type="RefSeq" id="WP_010952134.1">
    <property type="nucleotide sequence ID" value="NZ_CP169744.1"/>
</dbReference>
<dbReference type="SMR" id="Q88PB4"/>
<dbReference type="STRING" id="160488.PP_0936"/>
<dbReference type="PaxDb" id="160488-PP_0936"/>
<dbReference type="KEGG" id="ppu:PP_0936"/>
<dbReference type="PATRIC" id="fig|160488.4.peg.997"/>
<dbReference type="eggNOG" id="COG0424">
    <property type="taxonomic scope" value="Bacteria"/>
</dbReference>
<dbReference type="HOGENOM" id="CLU_040416_2_1_6"/>
<dbReference type="OrthoDB" id="9807767at2"/>
<dbReference type="PhylomeDB" id="Q88PB4"/>
<dbReference type="BioCyc" id="PPUT160488:G1G01-1010-MONOMER"/>
<dbReference type="Proteomes" id="UP000000556">
    <property type="component" value="Chromosome"/>
</dbReference>
<dbReference type="GO" id="GO:0005737">
    <property type="term" value="C:cytoplasm"/>
    <property type="evidence" value="ECO:0007669"/>
    <property type="project" value="UniProtKB-SubCell"/>
</dbReference>
<dbReference type="GO" id="GO:0036218">
    <property type="term" value="F:dTTP diphosphatase activity"/>
    <property type="evidence" value="ECO:0007669"/>
    <property type="project" value="RHEA"/>
</dbReference>
<dbReference type="GO" id="GO:0036221">
    <property type="term" value="F:UTP diphosphatase activity"/>
    <property type="evidence" value="ECO:0007669"/>
    <property type="project" value="RHEA"/>
</dbReference>
<dbReference type="GO" id="GO:0009117">
    <property type="term" value="P:nucleotide metabolic process"/>
    <property type="evidence" value="ECO:0007669"/>
    <property type="project" value="UniProtKB-KW"/>
</dbReference>
<dbReference type="CDD" id="cd00555">
    <property type="entry name" value="Maf"/>
    <property type="match status" value="1"/>
</dbReference>
<dbReference type="Gene3D" id="3.90.950.10">
    <property type="match status" value="1"/>
</dbReference>
<dbReference type="HAMAP" id="MF_00528">
    <property type="entry name" value="Maf"/>
    <property type="match status" value="1"/>
</dbReference>
<dbReference type="InterPro" id="IPR029001">
    <property type="entry name" value="ITPase-like_fam"/>
</dbReference>
<dbReference type="InterPro" id="IPR003697">
    <property type="entry name" value="Maf-like"/>
</dbReference>
<dbReference type="NCBIfam" id="TIGR00172">
    <property type="entry name" value="maf"/>
    <property type="match status" value="1"/>
</dbReference>
<dbReference type="PANTHER" id="PTHR43213">
    <property type="entry name" value="BIFUNCTIONAL DTTP/UTP PYROPHOSPHATASE/METHYLTRANSFERASE PROTEIN-RELATED"/>
    <property type="match status" value="1"/>
</dbReference>
<dbReference type="PANTHER" id="PTHR43213:SF5">
    <property type="entry name" value="BIFUNCTIONAL DTTP_UTP PYROPHOSPHATASE_METHYLTRANSFERASE PROTEIN-RELATED"/>
    <property type="match status" value="1"/>
</dbReference>
<dbReference type="Pfam" id="PF02545">
    <property type="entry name" value="Maf"/>
    <property type="match status" value="1"/>
</dbReference>
<dbReference type="PIRSF" id="PIRSF006305">
    <property type="entry name" value="Maf"/>
    <property type="match status" value="1"/>
</dbReference>
<dbReference type="SUPFAM" id="SSF52972">
    <property type="entry name" value="ITPase-like"/>
    <property type="match status" value="1"/>
</dbReference>
<proteinExistence type="inferred from homology"/>
<name>NTPPA_PSEPK</name>
<protein>
    <recommendedName>
        <fullName evidence="1">dTTP/UTP pyrophosphatase</fullName>
        <shortName evidence="1">dTTPase/UTPase</shortName>
        <ecNumber evidence="1">3.6.1.9</ecNumber>
    </recommendedName>
    <alternativeName>
        <fullName evidence="1">Nucleoside triphosphate pyrophosphatase</fullName>
    </alternativeName>
    <alternativeName>
        <fullName evidence="1">Nucleotide pyrophosphatase</fullName>
        <shortName evidence="1">Nucleotide PPase</shortName>
    </alternativeName>
</protein>
<organism>
    <name type="scientific">Pseudomonas putida (strain ATCC 47054 / DSM 6125 / CFBP 8728 / NCIMB 11950 / KT2440)</name>
    <dbReference type="NCBI Taxonomy" id="160488"/>
    <lineage>
        <taxon>Bacteria</taxon>
        <taxon>Pseudomonadati</taxon>
        <taxon>Pseudomonadota</taxon>
        <taxon>Gammaproteobacteria</taxon>
        <taxon>Pseudomonadales</taxon>
        <taxon>Pseudomonadaceae</taxon>
        <taxon>Pseudomonas</taxon>
    </lineage>
</organism>
<keyword id="KW-0963">Cytoplasm</keyword>
<keyword id="KW-0378">Hydrolase</keyword>
<keyword id="KW-0546">Nucleotide metabolism</keyword>
<keyword id="KW-1185">Reference proteome</keyword>
<gene>
    <name type="primary">maf-1</name>
    <name type="ordered locus">PP_0936</name>
</gene>
<reference key="1">
    <citation type="journal article" date="2002" name="Environ. Microbiol.">
        <title>Complete genome sequence and comparative analysis of the metabolically versatile Pseudomonas putida KT2440.</title>
        <authorList>
            <person name="Nelson K.E."/>
            <person name="Weinel C."/>
            <person name="Paulsen I.T."/>
            <person name="Dodson R.J."/>
            <person name="Hilbert H."/>
            <person name="Martins dos Santos V.A.P."/>
            <person name="Fouts D.E."/>
            <person name="Gill S.R."/>
            <person name="Pop M."/>
            <person name="Holmes M."/>
            <person name="Brinkac L.M."/>
            <person name="Beanan M.J."/>
            <person name="DeBoy R.T."/>
            <person name="Daugherty S.C."/>
            <person name="Kolonay J.F."/>
            <person name="Madupu R."/>
            <person name="Nelson W.C."/>
            <person name="White O."/>
            <person name="Peterson J.D."/>
            <person name="Khouri H.M."/>
            <person name="Hance I."/>
            <person name="Chris Lee P."/>
            <person name="Holtzapple E.K."/>
            <person name="Scanlan D."/>
            <person name="Tran K."/>
            <person name="Moazzez A."/>
            <person name="Utterback T.R."/>
            <person name="Rizzo M."/>
            <person name="Lee K."/>
            <person name="Kosack D."/>
            <person name="Moestl D."/>
            <person name="Wedler H."/>
            <person name="Lauber J."/>
            <person name="Stjepandic D."/>
            <person name="Hoheisel J."/>
            <person name="Straetz M."/>
            <person name="Heim S."/>
            <person name="Kiewitz C."/>
            <person name="Eisen J.A."/>
            <person name="Timmis K.N."/>
            <person name="Duesterhoeft A."/>
            <person name="Tuemmler B."/>
            <person name="Fraser C.M."/>
        </authorList>
    </citation>
    <scope>NUCLEOTIDE SEQUENCE [LARGE SCALE GENOMIC DNA]</scope>
    <source>
        <strain>ATCC 47054 / DSM 6125 / CFBP 8728 / NCIMB 11950 / KT2440</strain>
    </source>
</reference>
<feature type="chain" id="PRO_0000123046" description="dTTP/UTP pyrophosphatase">
    <location>
        <begin position="1"/>
        <end position="203"/>
    </location>
</feature>
<feature type="active site" description="Proton acceptor" evidence="1">
    <location>
        <position position="70"/>
    </location>
</feature>
<feature type="site" description="Important for substrate specificity" evidence="1">
    <location>
        <position position="12"/>
    </location>
</feature>
<feature type="site" description="Important for substrate specificity" evidence="1">
    <location>
        <position position="71"/>
    </location>
</feature>
<feature type="site" description="Important for substrate specificity" evidence="1">
    <location>
        <position position="153"/>
    </location>
</feature>
<comment type="function">
    <text evidence="1">Nucleoside triphosphate pyrophosphatase that hydrolyzes dTTP and UTP. May have a dual role in cell division arrest and in preventing the incorporation of modified nucleotides into cellular nucleic acids.</text>
</comment>
<comment type="catalytic activity">
    <reaction evidence="1">
        <text>dTTP + H2O = dTMP + diphosphate + H(+)</text>
        <dbReference type="Rhea" id="RHEA:28534"/>
        <dbReference type="ChEBI" id="CHEBI:15377"/>
        <dbReference type="ChEBI" id="CHEBI:15378"/>
        <dbReference type="ChEBI" id="CHEBI:33019"/>
        <dbReference type="ChEBI" id="CHEBI:37568"/>
        <dbReference type="ChEBI" id="CHEBI:63528"/>
        <dbReference type="EC" id="3.6.1.9"/>
    </reaction>
</comment>
<comment type="catalytic activity">
    <reaction evidence="1">
        <text>UTP + H2O = UMP + diphosphate + H(+)</text>
        <dbReference type="Rhea" id="RHEA:29395"/>
        <dbReference type="ChEBI" id="CHEBI:15377"/>
        <dbReference type="ChEBI" id="CHEBI:15378"/>
        <dbReference type="ChEBI" id="CHEBI:33019"/>
        <dbReference type="ChEBI" id="CHEBI:46398"/>
        <dbReference type="ChEBI" id="CHEBI:57865"/>
        <dbReference type="EC" id="3.6.1.9"/>
    </reaction>
</comment>
<comment type="cofactor">
    <cofactor evidence="1">
        <name>a divalent metal cation</name>
        <dbReference type="ChEBI" id="CHEBI:60240"/>
    </cofactor>
</comment>
<comment type="subcellular location">
    <subcellularLocation>
        <location evidence="1">Cytoplasm</location>
    </subcellularLocation>
</comment>
<comment type="similarity">
    <text evidence="1">Belongs to the Maf family. YhdE subfamily.</text>
</comment>
<evidence type="ECO:0000255" key="1">
    <source>
        <dbReference type="HAMAP-Rule" id="MF_00528"/>
    </source>
</evidence>
<accession>Q88PB4</accession>
<sequence length="203" mass="21232">MTPLYLASGSPRRRELLTQIGVPFIVISAPVDESPLPSESAPAYVERLARAKAAAGLVSVDGPAVVLGADTAVVLDGRILGKPENREDALAMLADLSGREHQVLTAVALDDGQRVHSFCVTSTVRFRAISTDEAQRYWASGEPSDKAGGYAIQGLGAVFVSGLSGSYSAVVGLPLCETADLLGQFGIACWQSLAHTPEVTNPQ</sequence>